<name>ZAPB_SALA4</name>
<evidence type="ECO:0000255" key="1">
    <source>
        <dbReference type="HAMAP-Rule" id="MF_01196"/>
    </source>
</evidence>
<evidence type="ECO:0000256" key="2">
    <source>
        <dbReference type="SAM" id="MobiDB-lite"/>
    </source>
</evidence>
<dbReference type="EMBL" id="CP001138">
    <property type="protein sequence ID" value="ACH51285.1"/>
    <property type="molecule type" value="Genomic_DNA"/>
</dbReference>
<dbReference type="RefSeq" id="WP_000051370.1">
    <property type="nucleotide sequence ID" value="NC_011149.1"/>
</dbReference>
<dbReference type="SMR" id="B5F0R9"/>
<dbReference type="KEGG" id="sea:SeAg_B4334"/>
<dbReference type="HOGENOM" id="CLU_171174_2_0_6"/>
<dbReference type="Proteomes" id="UP000008819">
    <property type="component" value="Chromosome"/>
</dbReference>
<dbReference type="GO" id="GO:0005737">
    <property type="term" value="C:cytoplasm"/>
    <property type="evidence" value="ECO:0007669"/>
    <property type="project" value="UniProtKB-SubCell"/>
</dbReference>
<dbReference type="GO" id="GO:0000917">
    <property type="term" value="P:division septum assembly"/>
    <property type="evidence" value="ECO:0007669"/>
    <property type="project" value="UniProtKB-KW"/>
</dbReference>
<dbReference type="GO" id="GO:0043093">
    <property type="term" value="P:FtsZ-dependent cytokinesis"/>
    <property type="evidence" value="ECO:0007669"/>
    <property type="project" value="UniProtKB-UniRule"/>
</dbReference>
<dbReference type="FunFam" id="1.20.5.340:FF:000014">
    <property type="entry name" value="Cell division protein ZapB"/>
    <property type="match status" value="1"/>
</dbReference>
<dbReference type="Gene3D" id="1.20.5.340">
    <property type="match status" value="1"/>
</dbReference>
<dbReference type="HAMAP" id="MF_01196">
    <property type="entry name" value="ZapB"/>
    <property type="match status" value="1"/>
</dbReference>
<dbReference type="InterPro" id="IPR009252">
    <property type="entry name" value="Cell_div_ZapB"/>
</dbReference>
<dbReference type="NCBIfam" id="NF011951">
    <property type="entry name" value="PRK15422.1"/>
    <property type="match status" value="1"/>
</dbReference>
<dbReference type="Pfam" id="PF06005">
    <property type="entry name" value="ZapB"/>
    <property type="match status" value="1"/>
</dbReference>
<comment type="function">
    <text evidence="1">Non-essential, abundant cell division factor that is required for proper Z-ring formation. It is recruited early to the divisome by direct interaction with FtsZ, stimulating Z-ring assembly and thereby promoting cell division earlier in the cell cycle. Its recruitment to the Z-ring requires functional FtsA or ZipA.</text>
</comment>
<comment type="subunit">
    <text evidence="1">Homodimer. The ends of the coiled-coil dimer bind to each other, forming polymers. Interacts with FtsZ.</text>
</comment>
<comment type="subcellular location">
    <subcellularLocation>
        <location evidence="1">Cytoplasm</location>
    </subcellularLocation>
    <text evidence="1">Localizes to the septum at mid-cell, in a FtsZ-like pattern.</text>
</comment>
<comment type="similarity">
    <text evidence="1">Belongs to the ZapB family.</text>
</comment>
<reference key="1">
    <citation type="journal article" date="2011" name="J. Bacteriol.">
        <title>Comparative genomics of 28 Salmonella enterica isolates: evidence for CRISPR-mediated adaptive sublineage evolution.</title>
        <authorList>
            <person name="Fricke W.F."/>
            <person name="Mammel M.K."/>
            <person name="McDermott P.F."/>
            <person name="Tartera C."/>
            <person name="White D.G."/>
            <person name="Leclerc J.E."/>
            <person name="Ravel J."/>
            <person name="Cebula T.A."/>
        </authorList>
    </citation>
    <scope>NUCLEOTIDE SEQUENCE [LARGE SCALE GENOMIC DNA]</scope>
    <source>
        <strain>SL483</strain>
    </source>
</reference>
<feature type="chain" id="PRO_1000138443" description="Cell division protein ZapB">
    <location>
        <begin position="1"/>
        <end position="79"/>
    </location>
</feature>
<feature type="region of interest" description="Disordered" evidence="2">
    <location>
        <begin position="36"/>
        <end position="63"/>
    </location>
</feature>
<feature type="coiled-coil region" evidence="1">
    <location>
        <begin position="3"/>
        <end position="79"/>
    </location>
</feature>
<feature type="compositionally biased region" description="Polar residues" evidence="2">
    <location>
        <begin position="36"/>
        <end position="45"/>
    </location>
</feature>
<feature type="compositionally biased region" description="Basic and acidic residues" evidence="2">
    <location>
        <begin position="46"/>
        <end position="57"/>
    </location>
</feature>
<proteinExistence type="inferred from homology"/>
<protein>
    <recommendedName>
        <fullName evidence="1">Cell division protein ZapB</fullName>
    </recommendedName>
</protein>
<sequence>MSLEVFEKLEAKVQQAIDTITLLQMEIEELKEKNNSLTQEVQSAQHQREELERENNSLKEQQSGWQERLQALLGRMEEV</sequence>
<organism>
    <name type="scientific">Salmonella agona (strain SL483)</name>
    <dbReference type="NCBI Taxonomy" id="454166"/>
    <lineage>
        <taxon>Bacteria</taxon>
        <taxon>Pseudomonadati</taxon>
        <taxon>Pseudomonadota</taxon>
        <taxon>Gammaproteobacteria</taxon>
        <taxon>Enterobacterales</taxon>
        <taxon>Enterobacteriaceae</taxon>
        <taxon>Salmonella</taxon>
    </lineage>
</organism>
<keyword id="KW-0131">Cell cycle</keyword>
<keyword id="KW-0132">Cell division</keyword>
<keyword id="KW-0175">Coiled coil</keyword>
<keyword id="KW-0963">Cytoplasm</keyword>
<keyword id="KW-0717">Septation</keyword>
<gene>
    <name evidence="1" type="primary">zapB</name>
    <name type="ordered locus">SeAg_B4334</name>
</gene>
<accession>B5F0R9</accession>